<proteinExistence type="evidence at protein level"/>
<organism>
    <name type="scientific">Saccharolobus solfataricus (strain ATCC 35092 / DSM 1617 / JCM 11322 / P2)</name>
    <name type="common">Sulfolobus solfataricus</name>
    <dbReference type="NCBI Taxonomy" id="273057"/>
    <lineage>
        <taxon>Archaea</taxon>
        <taxon>Thermoproteota</taxon>
        <taxon>Thermoprotei</taxon>
        <taxon>Sulfolobales</taxon>
        <taxon>Sulfolobaceae</taxon>
        <taxon>Saccharolobus</taxon>
    </lineage>
</organism>
<protein>
    <recommendedName>
        <fullName>Repressor-like protein SSo7c3</fullName>
    </recommendedName>
</protein>
<gene>
    <name type="ordered locus">SSO5984</name>
</gene>
<accession>P81551</accession>
<feature type="initiator methionine" description="Removed" evidence="2">
    <location>
        <position position="1"/>
    </location>
</feature>
<feature type="chain" id="PRO_0000097559" description="Repressor-like protein SSo7c3">
    <location>
        <begin position="2"/>
        <end position="52"/>
    </location>
</feature>
<feature type="domain" description="SpoVT-AbrB" evidence="1">
    <location>
        <begin position="4"/>
        <end position="51"/>
    </location>
</feature>
<feature type="sequence conflict" description="In Ref. 1." evidence="3" ref="1">
    <original>G</original>
    <variation>E</variation>
    <location>
        <position position="41"/>
    </location>
</feature>
<feature type="sequence conflict" description="In Ref. 1." evidence="3" ref="1">
    <original>DSP</original>
    <variation>KS</variation>
    <location>
        <begin position="50"/>
        <end position="52"/>
    </location>
</feature>
<reference key="1">
    <citation type="journal article" date="2001" name="Proc. Natl. Acad. Sci. U.S.A.">
        <title>The complete genome of the crenarchaeon Sulfolobus solfataricus P2.</title>
        <authorList>
            <person name="She Q."/>
            <person name="Singh R.K."/>
            <person name="Confalonieri F."/>
            <person name="Zivanovic Y."/>
            <person name="Allard G."/>
            <person name="Awayez M.J."/>
            <person name="Chan-Weiher C.C.-Y."/>
            <person name="Clausen I.G."/>
            <person name="Curtis B.A."/>
            <person name="De Moors A."/>
            <person name="Erauso G."/>
            <person name="Fletcher C."/>
            <person name="Gordon P.M.K."/>
            <person name="Heikamp-de Jong I."/>
            <person name="Jeffries A.C."/>
            <person name="Kozera C.J."/>
            <person name="Medina N."/>
            <person name="Peng X."/>
            <person name="Thi-Ngoc H.P."/>
            <person name="Redder P."/>
            <person name="Schenk M.E."/>
            <person name="Theriault C."/>
            <person name="Tolstrup N."/>
            <person name="Charlebois R.L."/>
            <person name="Doolittle W.F."/>
            <person name="Duguet M."/>
            <person name="Gaasterland T."/>
            <person name="Garrett R.A."/>
            <person name="Ragan M.A."/>
            <person name="Sensen C.W."/>
            <person name="Van der Oost J."/>
        </authorList>
    </citation>
    <scope>NUCLEOTIDE SEQUENCE [LARGE SCALE GENOMIC DNA]</scope>
    <source>
        <strain>ATCC 35092 / DSM 1617 / JCM 11322 / P2</strain>
    </source>
</reference>
<reference key="2">
    <citation type="journal article" date="1998" name="FEBS Lett.">
        <title>Isolation and structure of repressor-like proteins from the archaeon Sulfolobus solfataricus.</title>
        <authorList>
            <person name="Oppermann U.C.T."/>
            <person name="Knapp S."/>
            <person name="Bonetto V."/>
            <person name="Ladenstein R."/>
            <person name="Joernvall H."/>
        </authorList>
    </citation>
    <scope>PROTEIN SEQUENCE OF 2-52</scope>
    <scope>IDENTIFICATION BY MASS SPECTROMETRY</scope>
    <source>
        <strain>ATCC 35092 / DSM 1617 / JCM 11322 / P2</strain>
    </source>
</reference>
<dbReference type="EMBL" id="AE006641">
    <property type="status" value="NOT_ANNOTATED_CDS"/>
    <property type="molecule type" value="Genomic_DNA"/>
</dbReference>
<dbReference type="SMR" id="P81551"/>
<dbReference type="InParanoid" id="P81551"/>
<dbReference type="PhylomeDB" id="P81551"/>
<dbReference type="Proteomes" id="UP000001974">
    <property type="component" value="Chromosome"/>
</dbReference>
<dbReference type="GO" id="GO:0003677">
    <property type="term" value="F:DNA binding"/>
    <property type="evidence" value="ECO:0007669"/>
    <property type="project" value="UniProtKB-KW"/>
</dbReference>
<dbReference type="Gene3D" id="2.10.260.10">
    <property type="match status" value="1"/>
</dbReference>
<dbReference type="InterPro" id="IPR052975">
    <property type="entry name" value="Repressor-like_regulatory"/>
</dbReference>
<dbReference type="InterPro" id="IPR007159">
    <property type="entry name" value="SpoVT-AbrB_dom"/>
</dbReference>
<dbReference type="InterPro" id="IPR037914">
    <property type="entry name" value="SpoVT-AbrB_sf"/>
</dbReference>
<dbReference type="NCBIfam" id="TIGR01439">
    <property type="entry name" value="lp_hng_hel_AbrB"/>
    <property type="match status" value="1"/>
</dbReference>
<dbReference type="PANTHER" id="PTHR34860">
    <property type="entry name" value="REPRESSOR-LIKE PROTEIN SSO7C3"/>
    <property type="match status" value="1"/>
</dbReference>
<dbReference type="PANTHER" id="PTHR34860:SF6">
    <property type="entry name" value="REPRESSOR-LIKE PROTEIN SSO7C3"/>
    <property type="match status" value="1"/>
</dbReference>
<dbReference type="Pfam" id="PF04014">
    <property type="entry name" value="MazE_antitoxin"/>
    <property type="match status" value="1"/>
</dbReference>
<dbReference type="SMART" id="SM00966">
    <property type="entry name" value="SpoVT_AbrB"/>
    <property type="match status" value="1"/>
</dbReference>
<dbReference type="SUPFAM" id="SSF89447">
    <property type="entry name" value="AbrB/MazE/MraZ-like"/>
    <property type="match status" value="1"/>
</dbReference>
<dbReference type="PROSITE" id="PS51740">
    <property type="entry name" value="SPOVT_ABRB"/>
    <property type="match status" value="1"/>
</dbReference>
<sequence>MPVEEVVKVSRNYQVTIPAKVRQKFPVKEGDLVKVIYDENGGVVKIQILDSP</sequence>
<evidence type="ECO:0000255" key="1">
    <source>
        <dbReference type="PROSITE-ProRule" id="PRU01076"/>
    </source>
</evidence>
<evidence type="ECO:0000269" key="2">
    <source>
    </source>
</evidence>
<evidence type="ECO:0000305" key="3"/>
<keyword id="KW-0903">Direct protein sequencing</keyword>
<keyword id="KW-0238">DNA-binding</keyword>
<keyword id="KW-1185">Reference proteome</keyword>
<name>S7C3_SACS2</name>